<sequence length="256" mass="27130">MKIITCYKCVPDEQDIAVNNADGSLDFSKADAKISQYDLNAIEAACQLKQQAAEGQVTALSVGGKALTNAKGRKDVLSRGPDELIVVIDDQFEQALPQQTASALAAAAQKAGFDLILCGDGSSDLYAQQVGLLVGEILNIPAVNGVSKIISLTADTLTVERELEDETETLSIPLPAVVAVSTDINSPQIPSMKAILGAAKKPVQVWSAADIGFNAEAAWSEQQVAAPKQRERQRIVIEGDGEEQIAAFAENLRKVI</sequence>
<proteinExistence type="inferred from homology"/>
<accession>B7NHE5</accession>
<name>FIXA_ECO7I</name>
<reference key="1">
    <citation type="journal article" date="2009" name="PLoS Genet.">
        <title>Organised genome dynamics in the Escherichia coli species results in highly diverse adaptive paths.</title>
        <authorList>
            <person name="Touchon M."/>
            <person name="Hoede C."/>
            <person name="Tenaillon O."/>
            <person name="Barbe V."/>
            <person name="Baeriswyl S."/>
            <person name="Bidet P."/>
            <person name="Bingen E."/>
            <person name="Bonacorsi S."/>
            <person name="Bouchier C."/>
            <person name="Bouvet O."/>
            <person name="Calteau A."/>
            <person name="Chiapello H."/>
            <person name="Clermont O."/>
            <person name="Cruveiller S."/>
            <person name="Danchin A."/>
            <person name="Diard M."/>
            <person name="Dossat C."/>
            <person name="Karoui M.E."/>
            <person name="Frapy E."/>
            <person name="Garry L."/>
            <person name="Ghigo J.M."/>
            <person name="Gilles A.M."/>
            <person name="Johnson J."/>
            <person name="Le Bouguenec C."/>
            <person name="Lescat M."/>
            <person name="Mangenot S."/>
            <person name="Martinez-Jehanne V."/>
            <person name="Matic I."/>
            <person name="Nassif X."/>
            <person name="Oztas S."/>
            <person name="Petit M.A."/>
            <person name="Pichon C."/>
            <person name="Rouy Z."/>
            <person name="Ruf C.S."/>
            <person name="Schneider D."/>
            <person name="Tourret J."/>
            <person name="Vacherie B."/>
            <person name="Vallenet D."/>
            <person name="Medigue C."/>
            <person name="Rocha E.P.C."/>
            <person name="Denamur E."/>
        </authorList>
    </citation>
    <scope>NUCLEOTIDE SEQUENCE [LARGE SCALE GENOMIC DNA]</scope>
    <source>
        <strain>IAI39 / ExPEC</strain>
    </source>
</reference>
<keyword id="KW-0249">Electron transport</keyword>
<keyword id="KW-0813">Transport</keyword>
<comment type="function">
    <text evidence="1">Required for anaerobic carnitine reduction. May bring reductant to CaiA.</text>
</comment>
<comment type="pathway">
    <text evidence="1">Amine and polyamine metabolism; carnitine metabolism.</text>
</comment>
<comment type="subunit">
    <text evidence="1">Heterodimer of FixA and FixB.</text>
</comment>
<comment type="similarity">
    <text evidence="1">Belongs to the ETF beta-subunit/FixA family.</text>
</comment>
<evidence type="ECO:0000255" key="1">
    <source>
        <dbReference type="HAMAP-Rule" id="MF_01055"/>
    </source>
</evidence>
<protein>
    <recommendedName>
        <fullName evidence="1">Protein FixA</fullName>
    </recommendedName>
</protein>
<organism>
    <name type="scientific">Escherichia coli O7:K1 (strain IAI39 / ExPEC)</name>
    <dbReference type="NCBI Taxonomy" id="585057"/>
    <lineage>
        <taxon>Bacteria</taxon>
        <taxon>Pseudomonadati</taxon>
        <taxon>Pseudomonadota</taxon>
        <taxon>Gammaproteobacteria</taxon>
        <taxon>Enterobacterales</taxon>
        <taxon>Enterobacteriaceae</taxon>
        <taxon>Escherichia</taxon>
    </lineage>
</organism>
<feature type="chain" id="PRO_1000136315" description="Protein FixA">
    <location>
        <begin position="1"/>
        <end position="256"/>
    </location>
</feature>
<gene>
    <name evidence="1" type="primary">fixA</name>
    <name type="ordered locus">ECIAI39_0042</name>
</gene>
<dbReference type="EMBL" id="CU928164">
    <property type="protein sequence ID" value="CAR16183.1"/>
    <property type="molecule type" value="Genomic_DNA"/>
</dbReference>
<dbReference type="RefSeq" id="WP_000692225.1">
    <property type="nucleotide sequence ID" value="NC_011750.1"/>
</dbReference>
<dbReference type="RefSeq" id="YP_002406090.1">
    <property type="nucleotide sequence ID" value="NC_011750.1"/>
</dbReference>
<dbReference type="SMR" id="B7NHE5"/>
<dbReference type="STRING" id="585057.ECIAI39_0042"/>
<dbReference type="KEGG" id="ect:ECIAI39_0042"/>
<dbReference type="PATRIC" id="fig|585057.6.peg.46"/>
<dbReference type="HOGENOM" id="CLU_060196_2_2_6"/>
<dbReference type="UniPathway" id="UPA00117"/>
<dbReference type="Proteomes" id="UP000000749">
    <property type="component" value="Chromosome"/>
</dbReference>
<dbReference type="GO" id="GO:0009055">
    <property type="term" value="F:electron transfer activity"/>
    <property type="evidence" value="ECO:0007669"/>
    <property type="project" value="InterPro"/>
</dbReference>
<dbReference type="GO" id="GO:0009437">
    <property type="term" value="P:carnitine metabolic process"/>
    <property type="evidence" value="ECO:0007669"/>
    <property type="project" value="UniProtKB-UniRule"/>
</dbReference>
<dbReference type="CDD" id="cd01714">
    <property type="entry name" value="ETF_beta"/>
    <property type="match status" value="1"/>
</dbReference>
<dbReference type="FunFam" id="3.40.50.620:FF:000072">
    <property type="entry name" value="Protein FixA homolog"/>
    <property type="match status" value="1"/>
</dbReference>
<dbReference type="Gene3D" id="3.40.50.620">
    <property type="entry name" value="HUPs"/>
    <property type="match status" value="1"/>
</dbReference>
<dbReference type="HAMAP" id="MF_01055">
    <property type="entry name" value="FixA"/>
    <property type="match status" value="1"/>
</dbReference>
<dbReference type="InterPro" id="IPR000049">
    <property type="entry name" value="ET-Flavoprotein_bsu_CS"/>
</dbReference>
<dbReference type="InterPro" id="IPR014730">
    <property type="entry name" value="ETF_a/b_N"/>
</dbReference>
<dbReference type="InterPro" id="IPR012255">
    <property type="entry name" value="ETF_b"/>
</dbReference>
<dbReference type="InterPro" id="IPR033948">
    <property type="entry name" value="ETF_beta_N"/>
</dbReference>
<dbReference type="InterPro" id="IPR023463">
    <property type="entry name" value="FixA"/>
</dbReference>
<dbReference type="InterPro" id="IPR014729">
    <property type="entry name" value="Rossmann-like_a/b/a_fold"/>
</dbReference>
<dbReference type="NCBIfam" id="NF002888">
    <property type="entry name" value="PRK03359.1"/>
    <property type="match status" value="1"/>
</dbReference>
<dbReference type="NCBIfam" id="NF008998">
    <property type="entry name" value="PRK12342.1"/>
    <property type="match status" value="1"/>
</dbReference>
<dbReference type="PANTHER" id="PTHR21294">
    <property type="entry name" value="ELECTRON TRANSFER FLAVOPROTEIN BETA-SUBUNIT"/>
    <property type="match status" value="1"/>
</dbReference>
<dbReference type="PANTHER" id="PTHR21294:SF17">
    <property type="entry name" value="PROTEIN FIXA"/>
    <property type="match status" value="1"/>
</dbReference>
<dbReference type="Pfam" id="PF01012">
    <property type="entry name" value="ETF"/>
    <property type="match status" value="1"/>
</dbReference>
<dbReference type="PIRSF" id="PIRSF000090">
    <property type="entry name" value="Beta-ETF"/>
    <property type="match status" value="1"/>
</dbReference>
<dbReference type="SMART" id="SM00893">
    <property type="entry name" value="ETF"/>
    <property type="match status" value="1"/>
</dbReference>
<dbReference type="SUPFAM" id="SSF52402">
    <property type="entry name" value="Adenine nucleotide alpha hydrolases-like"/>
    <property type="match status" value="1"/>
</dbReference>
<dbReference type="PROSITE" id="PS01065">
    <property type="entry name" value="ETF_BETA"/>
    <property type="match status" value="1"/>
</dbReference>